<dbReference type="EMBL" id="CP001191">
    <property type="protein sequence ID" value="ACI53525.1"/>
    <property type="molecule type" value="Genomic_DNA"/>
</dbReference>
<dbReference type="RefSeq" id="WP_012556543.1">
    <property type="nucleotide sequence ID" value="NC_011369.1"/>
</dbReference>
<dbReference type="STRING" id="395492.Rleg2_0225"/>
<dbReference type="KEGG" id="rlt:Rleg2_0225"/>
<dbReference type="eggNOG" id="COG1970">
    <property type="taxonomic scope" value="Bacteria"/>
</dbReference>
<dbReference type="HOGENOM" id="CLU_095787_0_1_5"/>
<dbReference type="Proteomes" id="UP000008330">
    <property type="component" value="Chromosome"/>
</dbReference>
<dbReference type="GO" id="GO:0005886">
    <property type="term" value="C:plasma membrane"/>
    <property type="evidence" value="ECO:0007669"/>
    <property type="project" value="UniProtKB-SubCell"/>
</dbReference>
<dbReference type="GO" id="GO:0008381">
    <property type="term" value="F:mechanosensitive monoatomic ion channel activity"/>
    <property type="evidence" value="ECO:0007669"/>
    <property type="project" value="UniProtKB-UniRule"/>
</dbReference>
<dbReference type="Gene3D" id="1.10.1200.120">
    <property type="entry name" value="Large-conductance mechanosensitive channel, MscL, domain 1"/>
    <property type="match status" value="1"/>
</dbReference>
<dbReference type="HAMAP" id="MF_00115">
    <property type="entry name" value="MscL"/>
    <property type="match status" value="1"/>
</dbReference>
<dbReference type="InterPro" id="IPR019823">
    <property type="entry name" value="Mechanosensitive_channel_CS"/>
</dbReference>
<dbReference type="InterPro" id="IPR001185">
    <property type="entry name" value="MS_channel"/>
</dbReference>
<dbReference type="InterPro" id="IPR037673">
    <property type="entry name" value="MSC/AndL"/>
</dbReference>
<dbReference type="InterPro" id="IPR036019">
    <property type="entry name" value="MscL_channel"/>
</dbReference>
<dbReference type="NCBIfam" id="TIGR00220">
    <property type="entry name" value="mscL"/>
    <property type="match status" value="1"/>
</dbReference>
<dbReference type="NCBIfam" id="NF001843">
    <property type="entry name" value="PRK00567.1-4"/>
    <property type="match status" value="1"/>
</dbReference>
<dbReference type="NCBIfam" id="NF010557">
    <property type="entry name" value="PRK13952.1"/>
    <property type="match status" value="1"/>
</dbReference>
<dbReference type="PANTHER" id="PTHR30266:SF2">
    <property type="entry name" value="LARGE-CONDUCTANCE MECHANOSENSITIVE CHANNEL"/>
    <property type="match status" value="1"/>
</dbReference>
<dbReference type="PANTHER" id="PTHR30266">
    <property type="entry name" value="MECHANOSENSITIVE CHANNEL MSCL"/>
    <property type="match status" value="1"/>
</dbReference>
<dbReference type="Pfam" id="PF01741">
    <property type="entry name" value="MscL"/>
    <property type="match status" value="1"/>
</dbReference>
<dbReference type="PRINTS" id="PR01264">
    <property type="entry name" value="MECHCHANNEL"/>
</dbReference>
<dbReference type="SUPFAM" id="SSF81330">
    <property type="entry name" value="Gated mechanosensitive channel"/>
    <property type="match status" value="1"/>
</dbReference>
<dbReference type="PROSITE" id="PS01327">
    <property type="entry name" value="MSCL"/>
    <property type="match status" value="1"/>
</dbReference>
<protein>
    <recommendedName>
        <fullName evidence="1">Large-conductance mechanosensitive channel</fullName>
    </recommendedName>
</protein>
<organism>
    <name type="scientific">Rhizobium leguminosarum bv. trifolii (strain WSM2304)</name>
    <dbReference type="NCBI Taxonomy" id="395492"/>
    <lineage>
        <taxon>Bacteria</taxon>
        <taxon>Pseudomonadati</taxon>
        <taxon>Pseudomonadota</taxon>
        <taxon>Alphaproteobacteria</taxon>
        <taxon>Hyphomicrobiales</taxon>
        <taxon>Rhizobiaceae</taxon>
        <taxon>Rhizobium/Agrobacterium group</taxon>
        <taxon>Rhizobium</taxon>
    </lineage>
</organism>
<gene>
    <name evidence="1" type="primary">mscL</name>
    <name type="ordered locus">Rleg2_0225</name>
</gene>
<sequence length="145" mass="15596">MLNEFKAFIARGNVMDLAVGVIIGGAFGGIVKSLVDDLIMPIVGAIFGGFDFSNYFLPLSSAVNAPTLAAARAQGAVFAYGSFLTVLINFLILAWIIFLMVKGVNYLRLQVERQEKAAPEELPPPPADVQLLTEIRDLLATRPTA</sequence>
<evidence type="ECO:0000255" key="1">
    <source>
        <dbReference type="HAMAP-Rule" id="MF_00115"/>
    </source>
</evidence>
<name>MSCL_RHILW</name>
<reference key="1">
    <citation type="journal article" date="2010" name="Stand. Genomic Sci.">
        <title>Complete genome sequence of Rhizobium leguminosarum bv trifolii strain WSM2304, an effective microsymbiont of the South American clover Trifolium polymorphum.</title>
        <authorList>
            <person name="Reeve W."/>
            <person name="O'Hara G."/>
            <person name="Chain P."/>
            <person name="Ardley J."/>
            <person name="Brau L."/>
            <person name="Nandesena K."/>
            <person name="Tiwari R."/>
            <person name="Malfatti S."/>
            <person name="Kiss H."/>
            <person name="Lapidus A."/>
            <person name="Copeland A."/>
            <person name="Nolan M."/>
            <person name="Land M."/>
            <person name="Ivanova N."/>
            <person name="Mavromatis K."/>
            <person name="Markowitz V."/>
            <person name="Kyrpides N."/>
            <person name="Melino V."/>
            <person name="Denton M."/>
            <person name="Yates R."/>
            <person name="Howieson J."/>
        </authorList>
    </citation>
    <scope>NUCLEOTIDE SEQUENCE [LARGE SCALE GENOMIC DNA]</scope>
    <source>
        <strain>WSM2304</strain>
    </source>
</reference>
<keyword id="KW-0997">Cell inner membrane</keyword>
<keyword id="KW-1003">Cell membrane</keyword>
<keyword id="KW-0407">Ion channel</keyword>
<keyword id="KW-0406">Ion transport</keyword>
<keyword id="KW-0472">Membrane</keyword>
<keyword id="KW-1185">Reference proteome</keyword>
<keyword id="KW-0812">Transmembrane</keyword>
<keyword id="KW-1133">Transmembrane helix</keyword>
<keyword id="KW-0813">Transport</keyword>
<accession>B5ZPK8</accession>
<feature type="chain" id="PRO_1000094918" description="Large-conductance mechanosensitive channel">
    <location>
        <begin position="1"/>
        <end position="145"/>
    </location>
</feature>
<feature type="transmembrane region" description="Helical" evidence="1">
    <location>
        <begin position="14"/>
        <end position="34"/>
    </location>
</feature>
<feature type="transmembrane region" description="Helical" evidence="1">
    <location>
        <begin position="38"/>
        <end position="58"/>
    </location>
</feature>
<feature type="transmembrane region" description="Helical" evidence="1">
    <location>
        <begin position="81"/>
        <end position="101"/>
    </location>
</feature>
<proteinExistence type="inferred from homology"/>
<comment type="function">
    <text evidence="1">Channel that opens in response to stretch forces in the membrane lipid bilayer. May participate in the regulation of osmotic pressure changes within the cell.</text>
</comment>
<comment type="subunit">
    <text evidence="1">Homopentamer.</text>
</comment>
<comment type="subcellular location">
    <subcellularLocation>
        <location evidence="1">Cell inner membrane</location>
        <topology evidence="1">Multi-pass membrane protein</topology>
    </subcellularLocation>
</comment>
<comment type="similarity">
    <text evidence="1">Belongs to the MscL family.</text>
</comment>